<feature type="chain" id="PRO_1000089459" description="Octanoyltransferase">
    <location>
        <begin position="1"/>
        <end position="204"/>
    </location>
</feature>
<feature type="domain" description="BPL/LPL catalytic" evidence="2">
    <location>
        <begin position="27"/>
        <end position="202"/>
    </location>
</feature>
<feature type="active site" description="Acyl-thioester intermediate" evidence="1">
    <location>
        <position position="163"/>
    </location>
</feature>
<feature type="binding site" evidence="1">
    <location>
        <begin position="65"/>
        <end position="72"/>
    </location>
    <ligand>
        <name>substrate</name>
    </ligand>
</feature>
<feature type="binding site" evidence="1">
    <location>
        <begin position="132"/>
        <end position="134"/>
    </location>
    <ligand>
        <name>substrate</name>
    </ligand>
</feature>
<feature type="binding site" evidence="1">
    <location>
        <begin position="145"/>
        <end position="147"/>
    </location>
    <ligand>
        <name>substrate</name>
    </ligand>
</feature>
<feature type="site" description="Lowers pKa of active site Cys" evidence="1">
    <location>
        <position position="129"/>
    </location>
</feature>
<keyword id="KW-0012">Acyltransferase</keyword>
<keyword id="KW-0963">Cytoplasm</keyword>
<keyword id="KW-1185">Reference proteome</keyword>
<keyword id="KW-0808">Transferase</keyword>
<evidence type="ECO:0000255" key="1">
    <source>
        <dbReference type="HAMAP-Rule" id="MF_00013"/>
    </source>
</evidence>
<evidence type="ECO:0000255" key="2">
    <source>
        <dbReference type="PROSITE-ProRule" id="PRU01067"/>
    </source>
</evidence>
<organism>
    <name type="scientific">Citrifermentans bemidjiense (strain ATCC BAA-1014 / DSM 16622 / JCM 12645 / Bem)</name>
    <name type="common">Geobacter bemidjiensis</name>
    <dbReference type="NCBI Taxonomy" id="404380"/>
    <lineage>
        <taxon>Bacteria</taxon>
        <taxon>Pseudomonadati</taxon>
        <taxon>Thermodesulfobacteriota</taxon>
        <taxon>Desulfuromonadia</taxon>
        <taxon>Geobacterales</taxon>
        <taxon>Geobacteraceae</taxon>
        <taxon>Citrifermentans</taxon>
    </lineage>
</organism>
<dbReference type="EC" id="2.3.1.181" evidence="1"/>
<dbReference type="EMBL" id="CP001124">
    <property type="protein sequence ID" value="ACH37733.1"/>
    <property type="molecule type" value="Genomic_DNA"/>
</dbReference>
<dbReference type="SMR" id="B5EDZ5"/>
<dbReference type="STRING" id="404380.Gbem_0707"/>
<dbReference type="KEGG" id="gbm:Gbem_0707"/>
<dbReference type="eggNOG" id="COG0321">
    <property type="taxonomic scope" value="Bacteria"/>
</dbReference>
<dbReference type="HOGENOM" id="CLU_035168_1_3_7"/>
<dbReference type="OrthoDB" id="9787061at2"/>
<dbReference type="UniPathway" id="UPA00538">
    <property type="reaction ID" value="UER00592"/>
</dbReference>
<dbReference type="Proteomes" id="UP000008825">
    <property type="component" value="Chromosome"/>
</dbReference>
<dbReference type="GO" id="GO:0005737">
    <property type="term" value="C:cytoplasm"/>
    <property type="evidence" value="ECO:0007669"/>
    <property type="project" value="UniProtKB-SubCell"/>
</dbReference>
<dbReference type="GO" id="GO:0033819">
    <property type="term" value="F:lipoyl(octanoyl) transferase activity"/>
    <property type="evidence" value="ECO:0007669"/>
    <property type="project" value="UniProtKB-EC"/>
</dbReference>
<dbReference type="GO" id="GO:0036211">
    <property type="term" value="P:protein modification process"/>
    <property type="evidence" value="ECO:0007669"/>
    <property type="project" value="InterPro"/>
</dbReference>
<dbReference type="CDD" id="cd16444">
    <property type="entry name" value="LipB"/>
    <property type="match status" value="1"/>
</dbReference>
<dbReference type="Gene3D" id="3.30.930.10">
    <property type="entry name" value="Bira Bifunctional Protein, Domain 2"/>
    <property type="match status" value="1"/>
</dbReference>
<dbReference type="HAMAP" id="MF_00013">
    <property type="entry name" value="LipB"/>
    <property type="match status" value="1"/>
</dbReference>
<dbReference type="InterPro" id="IPR045864">
    <property type="entry name" value="aa-tRNA-synth_II/BPL/LPL"/>
</dbReference>
<dbReference type="InterPro" id="IPR004143">
    <property type="entry name" value="BPL_LPL_catalytic"/>
</dbReference>
<dbReference type="InterPro" id="IPR000544">
    <property type="entry name" value="Octanoyltransferase"/>
</dbReference>
<dbReference type="InterPro" id="IPR020605">
    <property type="entry name" value="Octanoyltransferase_CS"/>
</dbReference>
<dbReference type="NCBIfam" id="TIGR00214">
    <property type="entry name" value="lipB"/>
    <property type="match status" value="1"/>
</dbReference>
<dbReference type="NCBIfam" id="NF010925">
    <property type="entry name" value="PRK14345.1"/>
    <property type="match status" value="1"/>
</dbReference>
<dbReference type="PANTHER" id="PTHR10993:SF7">
    <property type="entry name" value="LIPOYLTRANSFERASE 2, MITOCHONDRIAL-RELATED"/>
    <property type="match status" value="1"/>
</dbReference>
<dbReference type="PANTHER" id="PTHR10993">
    <property type="entry name" value="OCTANOYLTRANSFERASE"/>
    <property type="match status" value="1"/>
</dbReference>
<dbReference type="Pfam" id="PF21948">
    <property type="entry name" value="LplA-B_cat"/>
    <property type="match status" value="1"/>
</dbReference>
<dbReference type="PIRSF" id="PIRSF016262">
    <property type="entry name" value="LPLase"/>
    <property type="match status" value="1"/>
</dbReference>
<dbReference type="SUPFAM" id="SSF55681">
    <property type="entry name" value="Class II aaRS and biotin synthetases"/>
    <property type="match status" value="1"/>
</dbReference>
<dbReference type="PROSITE" id="PS51733">
    <property type="entry name" value="BPL_LPL_CATALYTIC"/>
    <property type="match status" value="1"/>
</dbReference>
<dbReference type="PROSITE" id="PS01313">
    <property type="entry name" value="LIPB"/>
    <property type="match status" value="1"/>
</dbReference>
<protein>
    <recommendedName>
        <fullName evidence="1">Octanoyltransferase</fullName>
        <ecNumber evidence="1">2.3.1.181</ecNumber>
    </recommendedName>
    <alternativeName>
        <fullName evidence="1">Lipoate-protein ligase B</fullName>
    </alternativeName>
    <alternativeName>
        <fullName evidence="1">Lipoyl/octanoyl transferase</fullName>
    </alternativeName>
    <alternativeName>
        <fullName evidence="1">Octanoyl-[acyl-carrier-protein]-protein N-octanoyltransferase</fullName>
    </alternativeName>
</protein>
<name>LIPB_CITBB</name>
<gene>
    <name evidence="1" type="primary">lipB</name>
    <name type="ordered locus">Gbem_0707</name>
</gene>
<sequence>MIFKDVGVIGYAEALRIQEQLVAEVQQGGEEALLLLEHLPVYTIGAGGDRGNVLDPELEPVRVNRGGDVTYHGPGQLVCYPILDLSRRGRDLHRYLRFLERFLVELCAGLGVGCHTVPGRTGVWTGNGKLASIGVGVRRWVSMHGFALNVSPDTAPFSRINPCGMPGCSITSLSLELGEELFVDELKEMVAIRFQPLLNLHLPR</sequence>
<comment type="function">
    <text evidence="1">Catalyzes the transfer of endogenously produced octanoic acid from octanoyl-acyl-carrier-protein onto the lipoyl domains of lipoate-dependent enzymes. Lipoyl-ACP can also act as a substrate although octanoyl-ACP is likely to be the physiological substrate.</text>
</comment>
<comment type="catalytic activity">
    <reaction evidence="1">
        <text>octanoyl-[ACP] + L-lysyl-[protein] = N(6)-octanoyl-L-lysyl-[protein] + holo-[ACP] + H(+)</text>
        <dbReference type="Rhea" id="RHEA:17665"/>
        <dbReference type="Rhea" id="RHEA-COMP:9636"/>
        <dbReference type="Rhea" id="RHEA-COMP:9685"/>
        <dbReference type="Rhea" id="RHEA-COMP:9752"/>
        <dbReference type="Rhea" id="RHEA-COMP:9928"/>
        <dbReference type="ChEBI" id="CHEBI:15378"/>
        <dbReference type="ChEBI" id="CHEBI:29969"/>
        <dbReference type="ChEBI" id="CHEBI:64479"/>
        <dbReference type="ChEBI" id="CHEBI:78463"/>
        <dbReference type="ChEBI" id="CHEBI:78809"/>
        <dbReference type="EC" id="2.3.1.181"/>
    </reaction>
</comment>
<comment type="pathway">
    <text evidence="1">Protein modification; protein lipoylation via endogenous pathway; protein N(6)-(lipoyl)lysine from octanoyl-[acyl-carrier-protein]: step 1/2.</text>
</comment>
<comment type="subcellular location">
    <subcellularLocation>
        <location evidence="1">Cytoplasm</location>
    </subcellularLocation>
</comment>
<comment type="miscellaneous">
    <text evidence="1">In the reaction, the free carboxyl group of octanoic acid is attached via an amide linkage to the epsilon-amino group of a specific lysine residue of lipoyl domains of lipoate-dependent enzymes.</text>
</comment>
<comment type="similarity">
    <text evidence="1">Belongs to the LipB family.</text>
</comment>
<accession>B5EDZ5</accession>
<proteinExistence type="inferred from homology"/>
<reference key="1">
    <citation type="submission" date="2008-07" db="EMBL/GenBank/DDBJ databases">
        <title>Complete sequence of Geobacter bemidjiensis BEM.</title>
        <authorList>
            <consortium name="US DOE Joint Genome Institute"/>
            <person name="Lucas S."/>
            <person name="Copeland A."/>
            <person name="Lapidus A."/>
            <person name="Glavina del Rio T."/>
            <person name="Dalin E."/>
            <person name="Tice H."/>
            <person name="Bruce D."/>
            <person name="Goodwin L."/>
            <person name="Pitluck S."/>
            <person name="Kiss H."/>
            <person name="Brettin T."/>
            <person name="Detter J.C."/>
            <person name="Han C."/>
            <person name="Kuske C.R."/>
            <person name="Schmutz J."/>
            <person name="Larimer F."/>
            <person name="Land M."/>
            <person name="Hauser L."/>
            <person name="Kyrpides N."/>
            <person name="Lykidis A."/>
            <person name="Lovley D."/>
            <person name="Richardson P."/>
        </authorList>
    </citation>
    <scope>NUCLEOTIDE SEQUENCE [LARGE SCALE GENOMIC DNA]</scope>
    <source>
        <strain>ATCC BAA-1014 / DSM 16622 / JCM 12645 / Bem</strain>
    </source>
</reference>